<keyword id="KW-0025">Alternative splicing</keyword>
<keyword id="KW-1262">Eukaryotic host gene expression shutoff by virus</keyword>
<keyword id="KW-1035">Host cytoplasm</keyword>
<keyword id="KW-1190">Host gene expression shutoff by virus</keyword>
<keyword id="KW-1192">Host mRNA suppression by virus</keyword>
<keyword id="KW-1048">Host nucleus</keyword>
<keyword id="KW-0945">Host-virus interaction</keyword>
<keyword id="KW-1090">Inhibition of host innate immune response by virus</keyword>
<keyword id="KW-1114">Inhibition of host interferon signaling pathway by virus</keyword>
<keyword id="KW-1102">Inhibition of host PKR by virus</keyword>
<keyword id="KW-1103">Inhibition of host pre-mRNA processing by virus</keyword>
<keyword id="KW-1088">Inhibition of host RIG-I by virus</keyword>
<keyword id="KW-1113">Inhibition of host RLR pathway by virus</keyword>
<keyword id="KW-0922">Interferon antiviral system evasion</keyword>
<keyword id="KW-0694">RNA-binding</keyword>
<keyword id="KW-0832">Ubl conjugation</keyword>
<keyword id="KW-0899">Viral immunoevasion</keyword>
<sequence>MDSNTVSSFQVDCFLWHVRKRFADQELGDAPFLDRLRRDQKSLRGRGSTLGLDIETATRAGKQIVERILEEESDEALKMTIASVPASRYLTDMTLEEMSRDWFMLMPKQKVAGSLCIRMDQAIMDKNIILKANFSVIFDRLETLILLRAFTEEGAIVGEISPLPSLPGHTDEDVKNAIGVLIGGLEWNDNTVRVSETLQRFAWRSSNEDGRPPLPPKQKRKMARTIESEV</sequence>
<dbReference type="EMBL" id="U49483">
    <property type="protein sequence ID" value="AAB50993.1"/>
    <property type="molecule type" value="Genomic_RNA"/>
</dbReference>
<dbReference type="EMBL" id="M80946">
    <property type="protein sequence ID" value="AAC35568.1"/>
    <property type="molecule type" value="Genomic_RNA"/>
</dbReference>
<dbReference type="SMR" id="Q6LDH2"/>
<dbReference type="GO" id="GO:0030430">
    <property type="term" value="C:host cell cytoplasm"/>
    <property type="evidence" value="ECO:0007669"/>
    <property type="project" value="UniProtKB-SubCell"/>
</dbReference>
<dbReference type="GO" id="GO:0042025">
    <property type="term" value="C:host cell nucleus"/>
    <property type="evidence" value="ECO:0007669"/>
    <property type="project" value="UniProtKB-SubCell"/>
</dbReference>
<dbReference type="GO" id="GO:0030291">
    <property type="term" value="F:protein serine/threonine kinase inhibitor activity"/>
    <property type="evidence" value="ECO:0007669"/>
    <property type="project" value="UniProtKB-KW"/>
</dbReference>
<dbReference type="GO" id="GO:0003723">
    <property type="term" value="F:RNA binding"/>
    <property type="evidence" value="ECO:0007669"/>
    <property type="project" value="UniProtKB-KW"/>
</dbReference>
<dbReference type="GO" id="GO:0039540">
    <property type="term" value="P:symbiont-mediated suppression of host cytoplasmic pattern recognition receptor signaling pathway via inhibition of RIG-I activity"/>
    <property type="evidence" value="ECO:0007669"/>
    <property type="project" value="UniProtKB-KW"/>
</dbReference>
<dbReference type="GO" id="GO:0039657">
    <property type="term" value="P:symbiont-mediated suppression of host gene expression"/>
    <property type="evidence" value="ECO:0007669"/>
    <property type="project" value="UniProtKB-KW"/>
</dbReference>
<dbReference type="GO" id="GO:0039524">
    <property type="term" value="P:symbiont-mediated suppression of host mRNA processing"/>
    <property type="evidence" value="ECO:0007669"/>
    <property type="project" value="UniProtKB-KW"/>
</dbReference>
<dbReference type="GO" id="GO:0039580">
    <property type="term" value="P:symbiont-mediated suppression of host PKR/eIFalpha signaling"/>
    <property type="evidence" value="ECO:0007669"/>
    <property type="project" value="UniProtKB-KW"/>
</dbReference>
<dbReference type="GO" id="GO:0039502">
    <property type="term" value="P:symbiont-mediated suppression of host type I interferon-mediated signaling pathway"/>
    <property type="evidence" value="ECO:0007669"/>
    <property type="project" value="UniProtKB-KW"/>
</dbReference>
<dbReference type="FunFam" id="1.10.287.10:FF:000001">
    <property type="entry name" value="Non-structural protein 1"/>
    <property type="match status" value="1"/>
</dbReference>
<dbReference type="FunFam" id="3.30.420.330:FF:000001">
    <property type="entry name" value="Non-structural protein 1"/>
    <property type="match status" value="1"/>
</dbReference>
<dbReference type="Gene3D" id="3.30.420.330">
    <property type="entry name" value="Influenza virus non-structural protein, effector domain"/>
    <property type="match status" value="1"/>
</dbReference>
<dbReference type="Gene3D" id="1.10.287.10">
    <property type="entry name" value="S15/NS1, RNA-binding"/>
    <property type="match status" value="1"/>
</dbReference>
<dbReference type="HAMAP" id="MF_04066">
    <property type="entry name" value="INFV_NS1"/>
    <property type="match status" value="1"/>
</dbReference>
<dbReference type="InterPro" id="IPR004208">
    <property type="entry name" value="NS1"/>
</dbReference>
<dbReference type="InterPro" id="IPR000256">
    <property type="entry name" value="NS1A"/>
</dbReference>
<dbReference type="InterPro" id="IPR038064">
    <property type="entry name" value="NS1A_effect_dom-like_sf"/>
</dbReference>
<dbReference type="InterPro" id="IPR009068">
    <property type="entry name" value="uS15_NS1_RNA-bd_sf"/>
</dbReference>
<dbReference type="Pfam" id="PF00600">
    <property type="entry name" value="Flu_NS1"/>
    <property type="match status" value="1"/>
</dbReference>
<dbReference type="SUPFAM" id="SSF143021">
    <property type="entry name" value="Ns1 effector domain-like"/>
    <property type="match status" value="1"/>
</dbReference>
<dbReference type="SUPFAM" id="SSF47060">
    <property type="entry name" value="S15/NS1 RNA-binding domain"/>
    <property type="match status" value="1"/>
</dbReference>
<comment type="function">
    <text evidence="1">Inhibits post-transcriptional processing of cellular pre-mRNA, by binding and inhibiting two cellular proteins that are required for the 3'-end processing of cellular pre-mRNAs: the 30 kDa cleavage and polyadenylation specificity factor/CPSF4 and the poly(A)-binding protein 2/PABPN1. In turn, unprocessed 3' end pre-mRNAs accumulate in the host nucleus and are no longer exported to the cytoplasm. Cellular protein synthesis is thereby shut off very early after virus infection. Viral protein synthesis is not affected by the inhibition of the cellular 3' end processing machinery because the poly(A) tails of viral mRNAs are produced by the viral polymerase through a stuttering mechanism. Prevents the establishment of the cellular antiviral state by inhibiting TRIM25-mediated RIGI ubiquitination, which normally triggers the antiviral transduction signal that leads to the activation of type I IFN genes by transcription factors IRF3 and IRF7. Also binds poly(A) and U6 snRNA. Inhibits the integrated stress response (ISR) in the infected cell by blocking dsRNA binding by EIF2AK2/PKR and further phosphorylation of EIF2S1/EIF-2ALPHA. Stress granule formation is thus inhibited, which allows protein synthesis and viral replication.</text>
</comment>
<comment type="subunit">
    <text evidence="1">Homodimer. Interacts with host TRIM25 (via coiled coil); this interaction specifically inhibits TRIM25 multimerization and TRIM25-mediated RIGI CARD ubiquitination. Interacts with human EIF2AK2/PKR, CPSF4, IVNS1ABP and PABPN1.</text>
</comment>
<comment type="subcellular location">
    <subcellularLocation>
        <location evidence="1">Host nucleus</location>
    </subcellularLocation>
    <subcellularLocation>
        <location evidence="1">Host cytoplasm</location>
    </subcellularLocation>
    <text evidence="1">In uninfected, transfected cells, NS1 is localized in the nucleus. Only in virus infected cells, the nuclear export signal is unveiled, presumably by a viral protein, and a fraction of NS1 is exported in the cytoplasm.</text>
</comment>
<comment type="alternative products">
    <event type="alternative splicing"/>
    <isoform>
        <id>Q6LDH2-1</id>
        <name>NS1</name>
        <sequence type="displayed"/>
    </isoform>
    <isoform>
        <id>O09680-1</id>
        <name>NEP</name>
        <name>NS2</name>
        <sequence type="external"/>
    </isoform>
</comment>
<comment type="domain">
    <text evidence="1">The dsRNA-binding region is required for suppression of RNA silencing.</text>
</comment>
<comment type="PTM">
    <text evidence="1">Upon interferon induction, ISGylated via host HERC5; this results in the impairment of NS1 interaction with RNA targets due to its inability to form homodimers and to interact with host EIF2AK2/PKR.</text>
</comment>
<comment type="similarity">
    <text evidence="1">Belongs to the influenza A viruses NS1 family.</text>
</comment>
<accession>Q6LDH2</accession>
<accession>O09681</accession>
<gene>
    <name evidence="1" type="primary">NS</name>
</gene>
<organism>
    <name type="scientific">Influenza A virus (strain A/Ruddy Turnstone/New Jersey/47/1985 H4N6)</name>
    <dbReference type="NCBI Taxonomy" id="380343"/>
    <lineage>
        <taxon>Viruses</taxon>
        <taxon>Riboviria</taxon>
        <taxon>Orthornavirae</taxon>
        <taxon>Negarnaviricota</taxon>
        <taxon>Polyploviricotina</taxon>
        <taxon>Insthoviricetes</taxon>
        <taxon>Articulavirales</taxon>
        <taxon>Orthomyxoviridae</taxon>
        <taxon>Alphainfluenzavirus</taxon>
        <taxon>Alphainfluenzavirus influenzae</taxon>
        <taxon>Influenza A virus</taxon>
    </lineage>
</organism>
<organismHost>
    <name type="scientific">Aves</name>
    <dbReference type="NCBI Taxonomy" id="8782"/>
</organismHost>
<organismHost>
    <name type="scientific">Sus scrofa</name>
    <name type="common">Pig</name>
    <dbReference type="NCBI Taxonomy" id="9823"/>
</organismHost>
<reference key="1">
    <citation type="journal article" date="1996" name="J. Virol.">
        <title>Emergence of avian H1N1 influenza viruses in pigs in China.</title>
        <authorList>
            <person name="Guan Y."/>
            <person name="Shortridge K.F."/>
            <person name="Krauss S."/>
            <person name="Li P.H."/>
            <person name="Kawaoka Y."/>
            <person name="Webster R.G."/>
        </authorList>
    </citation>
    <scope>NUCLEOTIDE SEQUENCE [GENOMIC RNA] OF 4-230</scope>
</reference>
<reference key="2">
    <citation type="journal article" date="1998" name="Virus Res.">
        <title>Influence of host species on the evolution of the nonstructural (NS) gene of influenza A viruses.</title>
        <authorList>
            <person name="Kawaoka Y."/>
            <person name="Gorman O.T."/>
            <person name="Ito T."/>
            <person name="Wells K."/>
            <person name="Donis R.O."/>
            <person name="Castrucci M.R."/>
            <person name="Donatelli I."/>
            <person name="Webster R.G."/>
        </authorList>
    </citation>
    <scope>NUCLEOTIDE SEQUENCE [GENOMIC RNA]</scope>
</reference>
<evidence type="ECO:0000255" key="1">
    <source>
        <dbReference type="HAMAP-Rule" id="MF_04066"/>
    </source>
</evidence>
<evidence type="ECO:0000256" key="2">
    <source>
        <dbReference type="SAM" id="MobiDB-lite"/>
    </source>
</evidence>
<feature type="chain" id="PRO_0000324276" description="Non-structural protein 1">
    <location>
        <begin position="1"/>
        <end position="230"/>
    </location>
</feature>
<feature type="region of interest" description="RNA-binding and homodimerization" evidence="1">
    <location>
        <begin position="1"/>
        <end position="73"/>
    </location>
</feature>
<feature type="region of interest" description="CPSF4-binding" evidence="1">
    <location>
        <begin position="180"/>
        <end position="215"/>
    </location>
</feature>
<feature type="region of interest" description="Disordered" evidence="2">
    <location>
        <begin position="205"/>
        <end position="230"/>
    </location>
</feature>
<feature type="region of interest" description="PABPN1-binding" evidence="1">
    <location>
        <begin position="223"/>
        <end position="230"/>
    </location>
</feature>
<feature type="short sequence motif" description="Nuclear localization signal" evidence="1">
    <location>
        <begin position="34"/>
        <end position="38"/>
    </location>
</feature>
<feature type="short sequence motif" description="Nuclear export signal" evidence="1">
    <location>
        <begin position="137"/>
        <end position="146"/>
    </location>
</feature>
<protein>
    <recommendedName>
        <fullName evidence="1">Non-structural protein 1</fullName>
        <shortName evidence="1">NS1</shortName>
    </recommendedName>
    <alternativeName>
        <fullName evidence="1">NS1A</fullName>
    </alternativeName>
</protein>
<name>NS1_I85A7</name>
<proteinExistence type="inferred from homology"/>